<dbReference type="EMBL" id="BA000018">
    <property type="protein sequence ID" value="BAB41630.1"/>
    <property type="molecule type" value="Genomic_DNA"/>
</dbReference>
<dbReference type="PIR" id="C89809">
    <property type="entry name" value="C89809"/>
</dbReference>
<dbReference type="RefSeq" id="WP_001557596.1">
    <property type="nucleotide sequence ID" value="NC_002745.2"/>
</dbReference>
<dbReference type="SMR" id="Q7A7G2"/>
<dbReference type="EnsemblBacteria" id="BAB41630">
    <property type="protein sequence ID" value="BAB41630"/>
    <property type="gene ID" value="BAB41630"/>
</dbReference>
<dbReference type="KEGG" id="sau:SA0401"/>
<dbReference type="HOGENOM" id="CLU_071589_0_1_9"/>
<dbReference type="GO" id="GO:0005886">
    <property type="term" value="C:plasma membrane"/>
    <property type="evidence" value="ECO:0007669"/>
    <property type="project" value="UniProtKB-SubCell"/>
</dbReference>
<dbReference type="Gene3D" id="2.50.20.40">
    <property type="match status" value="1"/>
</dbReference>
<dbReference type="InterPro" id="IPR007595">
    <property type="entry name" value="Csa"/>
</dbReference>
<dbReference type="InterPro" id="IPR038641">
    <property type="entry name" value="Csa_sf"/>
</dbReference>
<dbReference type="NCBIfam" id="TIGR01742">
    <property type="entry name" value="SA_tandem_lipo"/>
    <property type="match status" value="1"/>
</dbReference>
<dbReference type="Pfam" id="PF04507">
    <property type="entry name" value="DUF576"/>
    <property type="match status" value="1"/>
</dbReference>
<dbReference type="PROSITE" id="PS51257">
    <property type="entry name" value="PROKAR_LIPOPROTEIN"/>
    <property type="match status" value="1"/>
</dbReference>
<accession>Q7A7G2</accession>
<keyword id="KW-1003">Cell membrane</keyword>
<keyword id="KW-0449">Lipoprotein</keyword>
<keyword id="KW-0472">Membrane</keyword>
<keyword id="KW-0564">Palmitate</keyword>
<keyword id="KW-0732">Signal</keyword>
<comment type="subcellular location">
    <subcellularLocation>
        <location evidence="1">Cell membrane</location>
        <topology evidence="1">Lipid-anchor</topology>
    </subcellularLocation>
</comment>
<comment type="similarity">
    <text evidence="2">Belongs to the staphylococcal tandem lipoprotein family.</text>
</comment>
<name>Y401_STAAN</name>
<proteinExistence type="inferred from homology"/>
<feature type="signal peptide" evidence="1">
    <location>
        <begin position="1"/>
        <end position="22"/>
    </location>
</feature>
<feature type="chain" id="PRO_0000282147" description="Uncharacterized lipoprotein SA0401">
    <location>
        <begin position="23"/>
        <end position="260"/>
    </location>
</feature>
<feature type="lipid moiety-binding region" description="N-palmitoyl cysteine" evidence="1">
    <location>
        <position position="23"/>
    </location>
</feature>
<feature type="lipid moiety-binding region" description="S-diacylglycerol cysteine" evidence="1">
    <location>
        <position position="23"/>
    </location>
</feature>
<organism>
    <name type="scientific">Staphylococcus aureus (strain N315)</name>
    <dbReference type="NCBI Taxonomy" id="158879"/>
    <lineage>
        <taxon>Bacteria</taxon>
        <taxon>Bacillati</taxon>
        <taxon>Bacillota</taxon>
        <taxon>Bacilli</taxon>
        <taxon>Bacillales</taxon>
        <taxon>Staphylococcaceae</taxon>
        <taxon>Staphylococcus</taxon>
    </lineage>
</organism>
<evidence type="ECO:0000255" key="1">
    <source>
        <dbReference type="PROSITE-ProRule" id="PRU00303"/>
    </source>
</evidence>
<evidence type="ECO:0000305" key="2"/>
<protein>
    <recommendedName>
        <fullName>Uncharacterized lipoprotein SA0401</fullName>
    </recommendedName>
</protein>
<reference key="1">
    <citation type="journal article" date="2001" name="Lancet">
        <title>Whole genome sequencing of meticillin-resistant Staphylococcus aureus.</title>
        <authorList>
            <person name="Kuroda M."/>
            <person name="Ohta T."/>
            <person name="Uchiyama I."/>
            <person name="Baba T."/>
            <person name="Yuzawa H."/>
            <person name="Kobayashi I."/>
            <person name="Cui L."/>
            <person name="Oguchi A."/>
            <person name="Aoki K."/>
            <person name="Nagai Y."/>
            <person name="Lian J.-Q."/>
            <person name="Ito T."/>
            <person name="Kanamori M."/>
            <person name="Matsumaru H."/>
            <person name="Maruyama A."/>
            <person name="Murakami H."/>
            <person name="Hosoyama A."/>
            <person name="Mizutani-Ui Y."/>
            <person name="Takahashi N.K."/>
            <person name="Sawano T."/>
            <person name="Inoue R."/>
            <person name="Kaito C."/>
            <person name="Sekimizu K."/>
            <person name="Hirakawa H."/>
            <person name="Kuhara S."/>
            <person name="Goto S."/>
            <person name="Yabuzaki J."/>
            <person name="Kanehisa M."/>
            <person name="Yamashita A."/>
            <person name="Oshima K."/>
            <person name="Furuya K."/>
            <person name="Yoshino C."/>
            <person name="Shiba T."/>
            <person name="Hattori M."/>
            <person name="Ogasawara N."/>
            <person name="Hayashi H."/>
            <person name="Hiramatsu K."/>
        </authorList>
    </citation>
    <scope>NUCLEOTIDE SEQUENCE [LARGE SCALE GENOMIC DNA]</scope>
    <source>
        <strain>N315</strain>
    </source>
</reference>
<gene>
    <name type="primary">lpl5</name>
    <name type="ordered locus">SA0401</name>
</gene>
<sequence length="260" mass="30108">MGYSKRFALYISILILIVMVAGCGKSDETKEDSKEEQIKKSFAKTLDMYPIKNLEDLYDKEGYRDGEFKKGDKGTWVLYSAIVSQPKGESLKSRGMILKLDRNKRTAKGSYIIRELKEDKNHDVQKNEKKYPVKLVNNRIVLVKDVKDKKLKNEIESFELFSQYGNFNHFDRNEITNISYNPNAPNYSAEYKMKKNDRNIQQLKKRFNLKTSKTPKLLFKGSGDIKGSSVGYKEIEIIFSRSKEEAFIMLTALSSFQVTK</sequence>